<evidence type="ECO:0000255" key="1">
    <source>
        <dbReference type="HAMAP-Rule" id="MF_00473"/>
    </source>
</evidence>
<protein>
    <recommendedName>
        <fullName evidence="1">Glucose-6-phosphate isomerase</fullName>
        <shortName evidence="1">GPI</shortName>
        <ecNumber evidence="1">5.3.1.9</ecNumber>
    </recommendedName>
    <alternativeName>
        <fullName evidence="1">Phosphoglucose isomerase</fullName>
        <shortName evidence="1">PGI</shortName>
    </alternativeName>
    <alternativeName>
        <fullName evidence="1">Phosphohexose isomerase</fullName>
        <shortName evidence="1">PHI</shortName>
    </alternativeName>
</protein>
<gene>
    <name evidence="1" type="primary">pgi</name>
    <name type="ordered locus">Deide_17080</name>
</gene>
<reference key="1">
    <citation type="journal article" date="2009" name="PLoS Genet.">
        <title>Alliance of proteomics and genomics to unravel the specificities of Sahara bacterium Deinococcus deserti.</title>
        <authorList>
            <person name="de Groot A."/>
            <person name="Dulermo R."/>
            <person name="Ortet P."/>
            <person name="Blanchard L."/>
            <person name="Guerin P."/>
            <person name="Fernandez B."/>
            <person name="Vacherie B."/>
            <person name="Dossat C."/>
            <person name="Jolivet E."/>
            <person name="Siguier P."/>
            <person name="Chandler M."/>
            <person name="Barakat M."/>
            <person name="Dedieu A."/>
            <person name="Barbe V."/>
            <person name="Heulin T."/>
            <person name="Sommer S."/>
            <person name="Achouak W."/>
            <person name="Armengaud J."/>
        </authorList>
    </citation>
    <scope>NUCLEOTIDE SEQUENCE [LARGE SCALE GENOMIC DNA]</scope>
    <source>
        <strain>DSM 17065 / CIP 109153 / LMG 22923 / VCD115</strain>
    </source>
</reference>
<organism>
    <name type="scientific">Deinococcus deserti (strain DSM 17065 / CIP 109153 / LMG 22923 / VCD115)</name>
    <dbReference type="NCBI Taxonomy" id="546414"/>
    <lineage>
        <taxon>Bacteria</taxon>
        <taxon>Thermotogati</taxon>
        <taxon>Deinococcota</taxon>
        <taxon>Deinococci</taxon>
        <taxon>Deinococcales</taxon>
        <taxon>Deinococcaceae</taxon>
        <taxon>Deinococcus</taxon>
    </lineage>
</organism>
<dbReference type="EC" id="5.3.1.9" evidence="1"/>
<dbReference type="EMBL" id="CP001114">
    <property type="protein sequence ID" value="ACO46679.1"/>
    <property type="molecule type" value="Genomic_DNA"/>
</dbReference>
<dbReference type="RefSeq" id="WP_012693801.1">
    <property type="nucleotide sequence ID" value="NC_012526.1"/>
</dbReference>
<dbReference type="SMR" id="C1CWW2"/>
<dbReference type="STRING" id="546414.Deide_17080"/>
<dbReference type="PaxDb" id="546414-Deide_17080"/>
<dbReference type="KEGG" id="ddr:Deide_17080"/>
<dbReference type="eggNOG" id="COG0166">
    <property type="taxonomic scope" value="Bacteria"/>
</dbReference>
<dbReference type="HOGENOM" id="CLU_017947_3_1_0"/>
<dbReference type="OrthoDB" id="140919at2"/>
<dbReference type="UniPathway" id="UPA00109">
    <property type="reaction ID" value="UER00181"/>
</dbReference>
<dbReference type="UniPathway" id="UPA00138"/>
<dbReference type="Proteomes" id="UP000002208">
    <property type="component" value="Chromosome"/>
</dbReference>
<dbReference type="GO" id="GO:0005829">
    <property type="term" value="C:cytosol"/>
    <property type="evidence" value="ECO:0007669"/>
    <property type="project" value="TreeGrafter"/>
</dbReference>
<dbReference type="GO" id="GO:0097367">
    <property type="term" value="F:carbohydrate derivative binding"/>
    <property type="evidence" value="ECO:0007669"/>
    <property type="project" value="InterPro"/>
</dbReference>
<dbReference type="GO" id="GO:0004347">
    <property type="term" value="F:glucose-6-phosphate isomerase activity"/>
    <property type="evidence" value="ECO:0007669"/>
    <property type="project" value="UniProtKB-UniRule"/>
</dbReference>
<dbReference type="GO" id="GO:0048029">
    <property type="term" value="F:monosaccharide binding"/>
    <property type="evidence" value="ECO:0007669"/>
    <property type="project" value="TreeGrafter"/>
</dbReference>
<dbReference type="GO" id="GO:0006094">
    <property type="term" value="P:gluconeogenesis"/>
    <property type="evidence" value="ECO:0007669"/>
    <property type="project" value="UniProtKB-UniRule"/>
</dbReference>
<dbReference type="GO" id="GO:0051156">
    <property type="term" value="P:glucose 6-phosphate metabolic process"/>
    <property type="evidence" value="ECO:0007669"/>
    <property type="project" value="TreeGrafter"/>
</dbReference>
<dbReference type="GO" id="GO:0006096">
    <property type="term" value="P:glycolytic process"/>
    <property type="evidence" value="ECO:0007669"/>
    <property type="project" value="UniProtKB-UniRule"/>
</dbReference>
<dbReference type="CDD" id="cd05015">
    <property type="entry name" value="SIS_PGI_1"/>
    <property type="match status" value="1"/>
</dbReference>
<dbReference type="CDD" id="cd05016">
    <property type="entry name" value="SIS_PGI_2"/>
    <property type="match status" value="1"/>
</dbReference>
<dbReference type="FunFam" id="1.10.1390.10:FF:000001">
    <property type="entry name" value="Glucose-6-phosphate isomerase"/>
    <property type="match status" value="1"/>
</dbReference>
<dbReference type="FunFam" id="3.40.50.10490:FF:000018">
    <property type="entry name" value="Glucose-6-phosphate isomerase"/>
    <property type="match status" value="1"/>
</dbReference>
<dbReference type="Gene3D" id="1.10.1390.10">
    <property type="match status" value="1"/>
</dbReference>
<dbReference type="Gene3D" id="3.40.50.10490">
    <property type="entry name" value="Glucose-6-phosphate isomerase like protein, domain 1"/>
    <property type="match status" value="2"/>
</dbReference>
<dbReference type="HAMAP" id="MF_00473">
    <property type="entry name" value="G6P_isomerase"/>
    <property type="match status" value="1"/>
</dbReference>
<dbReference type="InterPro" id="IPR001672">
    <property type="entry name" value="G6P_Isomerase"/>
</dbReference>
<dbReference type="InterPro" id="IPR023096">
    <property type="entry name" value="G6P_Isomerase_C"/>
</dbReference>
<dbReference type="InterPro" id="IPR018189">
    <property type="entry name" value="Phosphoglucose_isomerase_CS"/>
</dbReference>
<dbReference type="InterPro" id="IPR046348">
    <property type="entry name" value="SIS_dom_sf"/>
</dbReference>
<dbReference type="InterPro" id="IPR035476">
    <property type="entry name" value="SIS_PGI_1"/>
</dbReference>
<dbReference type="InterPro" id="IPR035482">
    <property type="entry name" value="SIS_PGI_2"/>
</dbReference>
<dbReference type="NCBIfam" id="NF001211">
    <property type="entry name" value="PRK00179.1"/>
    <property type="match status" value="1"/>
</dbReference>
<dbReference type="PANTHER" id="PTHR11469">
    <property type="entry name" value="GLUCOSE-6-PHOSPHATE ISOMERASE"/>
    <property type="match status" value="1"/>
</dbReference>
<dbReference type="PANTHER" id="PTHR11469:SF1">
    <property type="entry name" value="GLUCOSE-6-PHOSPHATE ISOMERASE"/>
    <property type="match status" value="1"/>
</dbReference>
<dbReference type="Pfam" id="PF00342">
    <property type="entry name" value="PGI"/>
    <property type="match status" value="1"/>
</dbReference>
<dbReference type="PRINTS" id="PR00662">
    <property type="entry name" value="G6PISOMERASE"/>
</dbReference>
<dbReference type="SUPFAM" id="SSF53697">
    <property type="entry name" value="SIS domain"/>
    <property type="match status" value="1"/>
</dbReference>
<dbReference type="PROSITE" id="PS00765">
    <property type="entry name" value="P_GLUCOSE_ISOMERASE_1"/>
    <property type="match status" value="1"/>
</dbReference>
<dbReference type="PROSITE" id="PS00174">
    <property type="entry name" value="P_GLUCOSE_ISOMERASE_2"/>
    <property type="match status" value="1"/>
</dbReference>
<dbReference type="PROSITE" id="PS51463">
    <property type="entry name" value="P_GLUCOSE_ISOMERASE_3"/>
    <property type="match status" value="1"/>
</dbReference>
<name>G6PI_DEIDV</name>
<sequence>MSAALTETPAWQALQAHFETLHSVHLRDLFAADPGRGERLTAEGAGLYLDYSKHRVTDETLDLLVALAHARGLPERRDAMFGGEKINVTEGRAVLHTALRAPRGSDVLVDGRNVVPDVHEVLERMAAFAQQVRSGSWLGHTGKPIRAIVNIGIGGSDLGPVMAYEALRHYAQRELTVRFVSNVDGTDLVEKTRDLTAEETLFIVSSKTFTTQETMANAQSARAWLLSALGDEAAVARHFVAVSTNAEAVQKFGIDTANMFEFWDWVGGRYSMDSAIGLSLMLAIGPDGFRELLSGFHDMDEHFRTAPLEANLPVLMGLLGVWYNNFFGAETLAVLPYDQYLAYFPAYLQQLDMESNGKHVTLDGQEVTYQTGPVVWGQPGTNGQHAFYQLIHQGTKLIPCDFIAFAQTLNPLPLPGGAPHHDLLMANVFAQTEALAFGKTLEEVLAEGVDAALAPHRVFDGNRPTSTLLVDRLTPRTLGALIALYEHKVFVQGVIWDVNSFDQWGVELGKVLARRIVKELGADEPELSHDSSTNALIRRYRERR</sequence>
<feature type="chain" id="PRO_1000206361" description="Glucose-6-phosphate isomerase">
    <location>
        <begin position="1"/>
        <end position="544"/>
    </location>
</feature>
<feature type="active site" description="Proton donor" evidence="1">
    <location>
        <position position="354"/>
    </location>
</feature>
<feature type="active site" evidence="1">
    <location>
        <position position="385"/>
    </location>
</feature>
<feature type="active site" evidence="1">
    <location>
        <position position="510"/>
    </location>
</feature>
<proteinExistence type="inferred from homology"/>
<keyword id="KW-0963">Cytoplasm</keyword>
<keyword id="KW-0312">Gluconeogenesis</keyword>
<keyword id="KW-0324">Glycolysis</keyword>
<keyword id="KW-0413">Isomerase</keyword>
<keyword id="KW-1185">Reference proteome</keyword>
<accession>C1CWW2</accession>
<comment type="function">
    <text evidence="1">Catalyzes the reversible isomerization of glucose-6-phosphate to fructose-6-phosphate.</text>
</comment>
<comment type="catalytic activity">
    <reaction evidence="1">
        <text>alpha-D-glucose 6-phosphate = beta-D-fructose 6-phosphate</text>
        <dbReference type="Rhea" id="RHEA:11816"/>
        <dbReference type="ChEBI" id="CHEBI:57634"/>
        <dbReference type="ChEBI" id="CHEBI:58225"/>
        <dbReference type="EC" id="5.3.1.9"/>
    </reaction>
</comment>
<comment type="pathway">
    <text evidence="1">Carbohydrate biosynthesis; gluconeogenesis.</text>
</comment>
<comment type="pathway">
    <text evidence="1">Carbohydrate degradation; glycolysis; D-glyceraldehyde 3-phosphate and glycerone phosphate from D-glucose: step 2/4.</text>
</comment>
<comment type="subcellular location">
    <subcellularLocation>
        <location evidence="1">Cytoplasm</location>
    </subcellularLocation>
</comment>
<comment type="similarity">
    <text evidence="1">Belongs to the GPI family.</text>
</comment>